<accession>O95999</accession>
<accession>Q5VUF1</accession>
<dbReference type="EMBL" id="AJ006288">
    <property type="protein sequence ID" value="CAA06955.1"/>
    <property type="molecule type" value="mRNA"/>
</dbReference>
<dbReference type="EMBL" id="AF057700">
    <property type="protein sequence ID" value="AAD15800.1"/>
    <property type="molecule type" value="mRNA"/>
</dbReference>
<dbReference type="EMBL" id="AF100338">
    <property type="protein sequence ID" value="AAD16428.1"/>
    <property type="molecule type" value="mRNA"/>
</dbReference>
<dbReference type="EMBL" id="AF127386">
    <property type="protein sequence ID" value="AAD32597.1"/>
    <property type="molecule type" value="mRNA"/>
</dbReference>
<dbReference type="EMBL" id="AF134395">
    <property type="protein sequence ID" value="AAD39147.1"/>
    <property type="molecule type" value="mRNA"/>
</dbReference>
<dbReference type="EMBL" id="AF105066">
    <property type="protein sequence ID" value="AAF06894.1"/>
    <property type="molecule type" value="mRNA"/>
</dbReference>
<dbReference type="EMBL" id="AF082283">
    <property type="protein sequence ID" value="AAC99767.1"/>
    <property type="molecule type" value="mRNA"/>
</dbReference>
<dbReference type="EMBL" id="AF097732">
    <property type="protein sequence ID" value="AAD24918.1"/>
    <property type="molecule type" value="Genomic_DNA"/>
</dbReference>
<dbReference type="EMBL" id="AK291346">
    <property type="protein sequence ID" value="BAF84035.1"/>
    <property type="molecule type" value="mRNA"/>
</dbReference>
<dbReference type="EMBL" id="AL590113">
    <property type="status" value="NOT_ANNOTATED_CDS"/>
    <property type="molecule type" value="Genomic_DNA"/>
</dbReference>
<dbReference type="EMBL" id="CH471097">
    <property type="protein sequence ID" value="EAW73208.1"/>
    <property type="molecule type" value="Genomic_DNA"/>
</dbReference>
<dbReference type="EMBL" id="BC053617">
    <property type="protein sequence ID" value="AAH53617.1"/>
    <property type="molecule type" value="mRNA"/>
</dbReference>
<dbReference type="CCDS" id="CCDS704.1"/>
<dbReference type="RefSeq" id="NP_003912.1">
    <property type="nucleotide sequence ID" value="NM_003921.5"/>
</dbReference>
<dbReference type="PDB" id="2MB9">
    <property type="method" value="NMR"/>
    <property type="chains" value="A=1-115"/>
</dbReference>
<dbReference type="PDB" id="6BZE">
    <property type="method" value="EM"/>
    <property type="resolution" value="4.00 A"/>
    <property type="chains" value="A/B/C/D/E/F/G/H=10-115"/>
</dbReference>
<dbReference type="PDB" id="6GK2">
    <property type="method" value="EM"/>
    <property type="resolution" value="4.90 A"/>
    <property type="chains" value="H=10-115"/>
</dbReference>
<dbReference type="PDB" id="8CZD">
    <property type="method" value="EM"/>
    <property type="resolution" value="4.60 A"/>
    <property type="chains" value="A/B/C/D/E/F/G/H/I/J/K/L/M/N/O/P/Q/R/S/T=10-115"/>
</dbReference>
<dbReference type="PDB" id="8CZO">
    <property type="method" value="EM"/>
    <property type="resolution" value="4.30 A"/>
    <property type="chains" value="A/B/C/D/E/F/G/H/I/J/K/L/M/N/O/P/Q/R/S/T/U/V=10-115"/>
</dbReference>
<dbReference type="PDBsum" id="2MB9"/>
<dbReference type="PDBsum" id="6BZE"/>
<dbReference type="PDBsum" id="6GK2"/>
<dbReference type="PDBsum" id="8CZD"/>
<dbReference type="PDBsum" id="8CZO"/>
<dbReference type="BMRB" id="O95999"/>
<dbReference type="EMDB" id="EMD-0013"/>
<dbReference type="EMDB" id="EMD-27095"/>
<dbReference type="EMDB" id="EMD-27100"/>
<dbReference type="EMDB" id="EMD-7314"/>
<dbReference type="SMR" id="O95999"/>
<dbReference type="BioGRID" id="114429">
    <property type="interactions" value="91"/>
</dbReference>
<dbReference type="ComplexPortal" id="CPX-8881">
    <property type="entry name" value="CARD-BCL10-MALT1 complex, CARD9 variant"/>
</dbReference>
<dbReference type="ComplexPortal" id="CPX-8901">
    <property type="entry name" value="CARD-BCL10-MALT1 complex, CARD11 variant"/>
</dbReference>
<dbReference type="ComplexPortal" id="CPX-8902">
    <property type="entry name" value="CARD-BCL10-MALT1 complex, CARD10 variant"/>
</dbReference>
<dbReference type="ComplexPortal" id="CPX-8906">
    <property type="entry name" value="CARD-BCL10-MALT1 complex, CARD14 variant"/>
</dbReference>
<dbReference type="CORUM" id="O95999"/>
<dbReference type="DIP" id="DIP-29740N"/>
<dbReference type="FunCoup" id="O95999">
    <property type="interactions" value="1387"/>
</dbReference>
<dbReference type="IntAct" id="O95999">
    <property type="interactions" value="48"/>
</dbReference>
<dbReference type="MINT" id="O95999"/>
<dbReference type="STRING" id="9606.ENSP00000498104"/>
<dbReference type="GlyGen" id="O95999">
    <property type="glycosylation" value="1 site, 1 O-linked glycan (1 site)"/>
</dbReference>
<dbReference type="iPTMnet" id="O95999"/>
<dbReference type="PhosphoSitePlus" id="O95999"/>
<dbReference type="SwissPalm" id="O95999"/>
<dbReference type="BioMuta" id="BCL10"/>
<dbReference type="jPOST" id="O95999"/>
<dbReference type="MassIVE" id="O95999"/>
<dbReference type="PaxDb" id="9606-ENSP00000359612"/>
<dbReference type="PeptideAtlas" id="O95999"/>
<dbReference type="ProteomicsDB" id="51178"/>
<dbReference type="Pumba" id="O95999"/>
<dbReference type="Antibodypedia" id="4526">
    <property type="antibodies" value="1342 antibodies from 47 providers"/>
</dbReference>
<dbReference type="CPTC" id="O95999">
    <property type="antibodies" value="1 antibody"/>
</dbReference>
<dbReference type="DNASU" id="8915"/>
<dbReference type="Ensembl" id="ENST00000648566.1">
    <property type="protein sequence ID" value="ENSP00000498104.1"/>
    <property type="gene ID" value="ENSG00000142867.14"/>
</dbReference>
<dbReference type="GeneID" id="8915"/>
<dbReference type="KEGG" id="hsa:8915"/>
<dbReference type="MANE-Select" id="ENST00000648566.1">
    <property type="protein sequence ID" value="ENSP00000498104.1"/>
    <property type="RefSeq nucleotide sequence ID" value="NM_003921.5"/>
    <property type="RefSeq protein sequence ID" value="NP_003912.1"/>
</dbReference>
<dbReference type="UCSC" id="uc021opd.3">
    <property type="organism name" value="human"/>
</dbReference>
<dbReference type="AGR" id="HGNC:989"/>
<dbReference type="CTD" id="8915"/>
<dbReference type="DisGeNET" id="8915"/>
<dbReference type="GeneCards" id="BCL10"/>
<dbReference type="HGNC" id="HGNC:989">
    <property type="gene designation" value="BCL10"/>
</dbReference>
<dbReference type="HPA" id="ENSG00000142867">
    <property type="expression patterns" value="Low tissue specificity"/>
</dbReference>
<dbReference type="MalaCards" id="BCL10"/>
<dbReference type="MIM" id="137245">
    <property type="type" value="phenotype"/>
</dbReference>
<dbReference type="MIM" id="603517">
    <property type="type" value="gene"/>
</dbReference>
<dbReference type="MIM" id="616098">
    <property type="type" value="phenotype"/>
</dbReference>
<dbReference type="neXtProt" id="NX_O95999"/>
<dbReference type="OpenTargets" id="ENSG00000142867"/>
<dbReference type="Orphanet" id="52417">
    <property type="disease" value="MALT lymphoma"/>
</dbReference>
<dbReference type="PharmGKB" id="PA25299"/>
<dbReference type="VEuPathDB" id="HostDB:ENSG00000142867"/>
<dbReference type="eggNOG" id="ENOG502RXGH">
    <property type="taxonomic scope" value="Eukaryota"/>
</dbReference>
<dbReference type="GeneTree" id="ENSGT00490000043442"/>
<dbReference type="HOGENOM" id="CLU_103803_0_0_1"/>
<dbReference type="InParanoid" id="O95999"/>
<dbReference type="OMA" id="HPDGEQS"/>
<dbReference type="OrthoDB" id="5984934at2759"/>
<dbReference type="PAN-GO" id="O95999">
    <property type="GO annotations" value="9 GO annotations based on evolutionary models"/>
</dbReference>
<dbReference type="PhylomeDB" id="O95999"/>
<dbReference type="TreeFam" id="TF328636"/>
<dbReference type="PathwayCommons" id="O95999"/>
<dbReference type="Reactome" id="R-HSA-1169091">
    <property type="pathway name" value="Activation of NF-kappaB in B cells"/>
</dbReference>
<dbReference type="Reactome" id="R-HSA-202424">
    <property type="pathway name" value="Downstream TCR signaling"/>
</dbReference>
<dbReference type="Reactome" id="R-HSA-2871837">
    <property type="pathway name" value="FCERI mediated NF-kB activation"/>
</dbReference>
<dbReference type="Reactome" id="R-HSA-5607764">
    <property type="pathway name" value="CLEC7A (Dectin-1) signaling"/>
</dbReference>
<dbReference type="Reactome" id="R-HSA-8866654">
    <property type="pathway name" value="E3 ubiquitin ligases ubiquitinate target proteins"/>
</dbReference>
<dbReference type="SignaLink" id="O95999"/>
<dbReference type="SIGNOR" id="O95999"/>
<dbReference type="BioGRID-ORCS" id="8915">
    <property type="hits" value="24 hits in 1173 CRISPR screens"/>
</dbReference>
<dbReference type="ChiTaRS" id="BCL10">
    <property type="organism name" value="human"/>
</dbReference>
<dbReference type="EvolutionaryTrace" id="O95999"/>
<dbReference type="GeneWiki" id="BCL10"/>
<dbReference type="GenomeRNAi" id="8915"/>
<dbReference type="Pharos" id="O95999">
    <property type="development level" value="Tbio"/>
</dbReference>
<dbReference type="PRO" id="PR:O95999"/>
<dbReference type="Proteomes" id="UP000005640">
    <property type="component" value="Chromosome 1"/>
</dbReference>
<dbReference type="RNAct" id="O95999">
    <property type="molecule type" value="protein"/>
</dbReference>
<dbReference type="Bgee" id="ENSG00000142867">
    <property type="expression patterns" value="Expressed in esophagus squamous epithelium and 192 other cell types or tissues"/>
</dbReference>
<dbReference type="ExpressionAtlas" id="O95999">
    <property type="expression patterns" value="baseline and differential"/>
</dbReference>
<dbReference type="GO" id="GO:0032449">
    <property type="term" value="C:CBM complex"/>
    <property type="evidence" value="ECO:0000314"/>
    <property type="project" value="UniProtKB"/>
</dbReference>
<dbReference type="GO" id="GO:0005737">
    <property type="term" value="C:cytoplasm"/>
    <property type="evidence" value="ECO:0000314"/>
    <property type="project" value="UniProtKB"/>
</dbReference>
<dbReference type="GO" id="GO:0005881">
    <property type="term" value="C:cytoplasmic microtubule"/>
    <property type="evidence" value="ECO:0000314"/>
    <property type="project" value="UniProtKB"/>
</dbReference>
<dbReference type="GO" id="GO:0005829">
    <property type="term" value="C:cytosol"/>
    <property type="evidence" value="ECO:0000314"/>
    <property type="project" value="UniProtKB"/>
</dbReference>
<dbReference type="GO" id="GO:0001772">
    <property type="term" value="C:immunological synapse"/>
    <property type="evidence" value="ECO:0007669"/>
    <property type="project" value="Ensembl"/>
</dbReference>
<dbReference type="GO" id="GO:0005764">
    <property type="term" value="C:lysosome"/>
    <property type="evidence" value="ECO:0000314"/>
    <property type="project" value="UniProtKB"/>
</dbReference>
<dbReference type="GO" id="GO:0045121">
    <property type="term" value="C:membrane raft"/>
    <property type="evidence" value="ECO:0007669"/>
    <property type="project" value="UniProtKB-SubCell"/>
</dbReference>
<dbReference type="GO" id="GO:0005654">
    <property type="term" value="C:nucleoplasm"/>
    <property type="evidence" value="ECO:0000314"/>
    <property type="project" value="HPA"/>
</dbReference>
<dbReference type="GO" id="GO:0005634">
    <property type="term" value="C:nucleus"/>
    <property type="evidence" value="ECO:0000314"/>
    <property type="project" value="UniProtKB"/>
</dbReference>
<dbReference type="GO" id="GO:0048471">
    <property type="term" value="C:perinuclear region of cytoplasm"/>
    <property type="evidence" value="ECO:0000314"/>
    <property type="project" value="UniProtKB"/>
</dbReference>
<dbReference type="GO" id="GO:0002096">
    <property type="term" value="C:polkadots"/>
    <property type="evidence" value="ECO:0007669"/>
    <property type="project" value="Ensembl"/>
</dbReference>
<dbReference type="GO" id="GO:0032991">
    <property type="term" value="C:protein-containing complex"/>
    <property type="evidence" value="ECO:0000314"/>
    <property type="project" value="UniProtKB"/>
</dbReference>
<dbReference type="GO" id="GO:0050700">
    <property type="term" value="F:CARD domain binding"/>
    <property type="evidence" value="ECO:0007669"/>
    <property type="project" value="Ensembl"/>
</dbReference>
<dbReference type="GO" id="GO:0140296">
    <property type="term" value="F:general transcription initiation factor binding"/>
    <property type="evidence" value="ECO:0000353"/>
    <property type="project" value="UniProtKB"/>
</dbReference>
<dbReference type="GO" id="GO:0042802">
    <property type="term" value="F:identical protein binding"/>
    <property type="evidence" value="ECO:0000353"/>
    <property type="project" value="IntAct"/>
</dbReference>
<dbReference type="GO" id="GO:0051059">
    <property type="term" value="F:NF-kappaB binding"/>
    <property type="evidence" value="ECO:0000314"/>
    <property type="project" value="UniProtKB"/>
</dbReference>
<dbReference type="GO" id="GO:0002020">
    <property type="term" value="F:protease binding"/>
    <property type="evidence" value="ECO:0000353"/>
    <property type="project" value="BHF-UCL"/>
</dbReference>
<dbReference type="GO" id="GO:0043422">
    <property type="term" value="F:protein kinase B binding"/>
    <property type="evidence" value="ECO:0000353"/>
    <property type="project" value="UniProtKB"/>
</dbReference>
<dbReference type="GO" id="GO:0044877">
    <property type="term" value="F:protein-containing complex binding"/>
    <property type="evidence" value="ECO:0007669"/>
    <property type="project" value="Ensembl"/>
</dbReference>
<dbReference type="GO" id="GO:0030674">
    <property type="term" value="F:protein-macromolecule adaptor activity"/>
    <property type="evidence" value="ECO:0000314"/>
    <property type="project" value="UniProt"/>
</dbReference>
<dbReference type="GO" id="GO:0035591">
    <property type="term" value="F:signaling adaptor activity"/>
    <property type="evidence" value="ECO:0007669"/>
    <property type="project" value="Ensembl"/>
</dbReference>
<dbReference type="GO" id="GO:0003713">
    <property type="term" value="F:transcription coactivator activity"/>
    <property type="evidence" value="ECO:0000314"/>
    <property type="project" value="UniProtKB"/>
</dbReference>
<dbReference type="GO" id="GO:0031625">
    <property type="term" value="F:ubiquitin protein ligase binding"/>
    <property type="evidence" value="ECO:0000353"/>
    <property type="project" value="UniProtKB"/>
</dbReference>
<dbReference type="GO" id="GO:0002250">
    <property type="term" value="P:adaptive immune response"/>
    <property type="evidence" value="ECO:0000315"/>
    <property type="project" value="UniProtKB"/>
</dbReference>
<dbReference type="GO" id="GO:0061760">
    <property type="term" value="P:antifungal innate immune response"/>
    <property type="evidence" value="ECO:0000250"/>
    <property type="project" value="UniProtKB"/>
</dbReference>
<dbReference type="GO" id="GO:0097190">
    <property type="term" value="P:apoptotic signaling pathway"/>
    <property type="evidence" value="ECO:0000315"/>
    <property type="project" value="ARUK-UCL"/>
</dbReference>
<dbReference type="GO" id="GO:0001783">
    <property type="term" value="P:B cell apoptotic process"/>
    <property type="evidence" value="ECO:0007669"/>
    <property type="project" value="Ensembl"/>
</dbReference>
<dbReference type="GO" id="GO:0006968">
    <property type="term" value="P:cellular defense response"/>
    <property type="evidence" value="ECO:0007669"/>
    <property type="project" value="Ensembl"/>
</dbReference>
<dbReference type="GO" id="GO:0071222">
    <property type="term" value="P:cellular response to lipopolysaccharide"/>
    <property type="evidence" value="ECO:0000270"/>
    <property type="project" value="UniProtKB"/>
</dbReference>
<dbReference type="GO" id="GO:0071260">
    <property type="term" value="P:cellular response to mechanical stimulus"/>
    <property type="evidence" value="ECO:0000270"/>
    <property type="project" value="UniProtKB"/>
</dbReference>
<dbReference type="GO" id="GO:0016064">
    <property type="term" value="P:immunoglobulin mediated immune response"/>
    <property type="evidence" value="ECO:0007669"/>
    <property type="project" value="Ensembl"/>
</dbReference>
<dbReference type="GO" id="GO:0045087">
    <property type="term" value="P:innate immune response"/>
    <property type="evidence" value="ECO:0000270"/>
    <property type="project" value="UniProtKB"/>
</dbReference>
<dbReference type="GO" id="GO:0031663">
    <property type="term" value="P:lipopolysaccharide-mediated signaling pathway"/>
    <property type="evidence" value="ECO:0000314"/>
    <property type="project" value="UniProtKB"/>
</dbReference>
<dbReference type="GO" id="GO:0002906">
    <property type="term" value="P:negative regulation of mature B cell apoptotic process"/>
    <property type="evidence" value="ECO:0000314"/>
    <property type="project" value="UniProtKB"/>
</dbReference>
<dbReference type="GO" id="GO:0001843">
    <property type="term" value="P:neural tube closure"/>
    <property type="evidence" value="ECO:0000250"/>
    <property type="project" value="UniProtKB"/>
</dbReference>
<dbReference type="GO" id="GO:0038061">
    <property type="term" value="P:non-canonical NF-kappaB signal transduction"/>
    <property type="evidence" value="ECO:0007669"/>
    <property type="project" value="Ensembl"/>
</dbReference>
<dbReference type="GO" id="GO:0043065">
    <property type="term" value="P:positive regulation of apoptotic process"/>
    <property type="evidence" value="ECO:0000314"/>
    <property type="project" value="UniProtKB"/>
</dbReference>
<dbReference type="GO" id="GO:0043123">
    <property type="term" value="P:positive regulation of canonical NF-kappaB signal transduction"/>
    <property type="evidence" value="ECO:0000314"/>
    <property type="project" value="UniProtKB"/>
</dbReference>
<dbReference type="GO" id="GO:0045893">
    <property type="term" value="P:positive regulation of DNA-templated transcription"/>
    <property type="evidence" value="ECO:0000314"/>
    <property type="project" value="UniProtKB"/>
</dbReference>
<dbReference type="GO" id="GO:2001238">
    <property type="term" value="P:positive regulation of extrinsic apoptotic signaling pathway"/>
    <property type="evidence" value="ECO:0000314"/>
    <property type="project" value="UniProtKB"/>
</dbReference>
<dbReference type="GO" id="GO:0032755">
    <property type="term" value="P:positive regulation of interleukin-6 production"/>
    <property type="evidence" value="ECO:0000303"/>
    <property type="project" value="GO_Central"/>
</dbReference>
<dbReference type="GO" id="GO:0032757">
    <property type="term" value="P:positive regulation of interleukin-8 production"/>
    <property type="evidence" value="ECO:0000315"/>
    <property type="project" value="UniProtKB"/>
</dbReference>
<dbReference type="GO" id="GO:0032761">
    <property type="term" value="P:positive regulation of lymphotoxin A production"/>
    <property type="evidence" value="ECO:0000303"/>
    <property type="project" value="GO_Central"/>
</dbReference>
<dbReference type="GO" id="GO:0032765">
    <property type="term" value="P:positive regulation of mast cell cytokine production"/>
    <property type="evidence" value="ECO:0000303"/>
    <property type="project" value="GO_Central"/>
</dbReference>
<dbReference type="GO" id="GO:0051092">
    <property type="term" value="P:positive regulation of NF-kappaB transcription factor activity"/>
    <property type="evidence" value="ECO:0000314"/>
    <property type="project" value="UniProtKB"/>
</dbReference>
<dbReference type="GO" id="GO:0042327">
    <property type="term" value="P:positive regulation of phosphorylation"/>
    <property type="evidence" value="ECO:0000314"/>
    <property type="project" value="UniProtKB"/>
</dbReference>
<dbReference type="GO" id="GO:0031398">
    <property type="term" value="P:positive regulation of protein ubiquitination"/>
    <property type="evidence" value="ECO:0000314"/>
    <property type="project" value="UniProtKB"/>
</dbReference>
<dbReference type="GO" id="GO:0050870">
    <property type="term" value="P:positive regulation of T cell activation"/>
    <property type="evidence" value="ECO:0007669"/>
    <property type="project" value="Ensembl"/>
</dbReference>
<dbReference type="GO" id="GO:0050862">
    <property type="term" value="P:positive regulation of T cell receptor signaling pathway"/>
    <property type="evidence" value="ECO:0000314"/>
    <property type="project" value="UniProtKB"/>
</dbReference>
<dbReference type="GO" id="GO:0012501">
    <property type="term" value="P:programmed cell death"/>
    <property type="evidence" value="ECO:0000314"/>
    <property type="project" value="UniProtKB"/>
</dbReference>
<dbReference type="GO" id="GO:0051260">
    <property type="term" value="P:protein homooligomerization"/>
    <property type="evidence" value="ECO:0000314"/>
    <property type="project" value="UniProtKB"/>
</dbReference>
<dbReference type="GO" id="GO:0032094">
    <property type="term" value="P:response to food"/>
    <property type="evidence" value="ECO:0000314"/>
    <property type="project" value="UniProtKB"/>
</dbReference>
<dbReference type="GO" id="GO:0070231">
    <property type="term" value="P:T cell apoptotic process"/>
    <property type="evidence" value="ECO:0007669"/>
    <property type="project" value="Ensembl"/>
</dbReference>
<dbReference type="GO" id="GO:0050852">
    <property type="term" value="P:T cell receptor signaling pathway"/>
    <property type="evidence" value="ECO:0000314"/>
    <property type="project" value="UniProtKB"/>
</dbReference>
<dbReference type="GO" id="GO:0002224">
    <property type="term" value="P:toll-like receptor signaling pathway"/>
    <property type="evidence" value="ECO:0000314"/>
    <property type="project" value="UniProtKB"/>
</dbReference>
<dbReference type="CDD" id="cd08810">
    <property type="entry name" value="CARD_BCL10"/>
    <property type="match status" value="1"/>
</dbReference>
<dbReference type="FunFam" id="1.10.533.10:FF:000022">
    <property type="entry name" value="B-cell lymphoma/leukemia 10"/>
    <property type="match status" value="1"/>
</dbReference>
<dbReference type="Gene3D" id="1.10.533.10">
    <property type="entry name" value="Death Domain, Fas"/>
    <property type="match status" value="1"/>
</dbReference>
<dbReference type="InterPro" id="IPR033238">
    <property type="entry name" value="BCL10/E10"/>
</dbReference>
<dbReference type="InterPro" id="IPR001315">
    <property type="entry name" value="CARD"/>
</dbReference>
<dbReference type="InterPro" id="IPR042143">
    <property type="entry name" value="CARD_BCL10"/>
</dbReference>
<dbReference type="InterPro" id="IPR011029">
    <property type="entry name" value="DEATH-like_dom_sf"/>
</dbReference>
<dbReference type="PANTHER" id="PTHR34920">
    <property type="entry name" value="B-CELL LYMPHOMA/LEUKEMIA 10"/>
    <property type="match status" value="1"/>
</dbReference>
<dbReference type="PANTHER" id="PTHR34920:SF1">
    <property type="entry name" value="B-CELL LYMPHOMA_LEUKEMIA 10"/>
    <property type="match status" value="1"/>
</dbReference>
<dbReference type="Pfam" id="PF00619">
    <property type="entry name" value="CARD"/>
    <property type="match status" value="1"/>
</dbReference>
<dbReference type="SUPFAM" id="SSF47986">
    <property type="entry name" value="DEATH domain"/>
    <property type="match status" value="1"/>
</dbReference>
<dbReference type="PROSITE" id="PS50209">
    <property type="entry name" value="CARD"/>
    <property type="match status" value="1"/>
</dbReference>
<reference key="1">
    <citation type="journal article" date="1999" name="Cell">
        <title>Bcl10 is involved in t(1;14)(p22;q32) of MALT B cell lymphoma and mutated in multiple tumor types.</title>
        <authorList>
            <person name="Willis T.G."/>
            <person name="Jadayel D.M."/>
            <person name="Du M.-Q."/>
            <person name="Peng H."/>
            <person name="Perry A.R."/>
            <person name="Abdul-Rauf M."/>
            <person name="Price H."/>
            <person name="Karran L."/>
            <person name="Majekodunmi O."/>
            <person name="Wlodarska I."/>
            <person name="Pan L."/>
            <person name="Crook T."/>
            <person name="Hamoudi R."/>
            <person name="Isaacson P."/>
            <person name="Dyer M.J.S."/>
        </authorList>
    </citation>
    <scope>NUCLEOTIDE SEQUENCE [MRNA]</scope>
    <scope>TISSUE SPECIFICITY</scope>
    <scope>INVOLVEMENT IN MALTOMA</scope>
    <scope>VARIANTS ILE-52; GLY-58; GLU-210 DEL AND PHE-218</scope>
    <source>
        <tissue>Lymphoma</tissue>
    </source>
</reference>
<reference key="2">
    <citation type="journal article" date="1999" name="J. Biol. Chem.">
        <title>CIPER, a novel NF kappaB-activating protein containing a caspase recruitment domain with homology to Herpesvirus-2 protein E10.</title>
        <authorList>
            <person name="Koseki T."/>
            <person name="Inohara N."/>
            <person name="Chen S."/>
            <person name="Carrio R."/>
            <person name="Merino J."/>
            <person name="Hottiger M.O."/>
            <person name="Nabel G.J."/>
            <person name="Nunez G."/>
        </authorList>
    </citation>
    <scope>NUCLEOTIDE SEQUENCE [MRNA]</scope>
    <scope>FUNCTION</scope>
    <scope>MUTAGENESIS OF LEU-41 AND GLY-78</scope>
</reference>
<reference key="3">
    <citation type="journal article" date="1999" name="J. Biol. Chem.">
        <title>Equine herpesvirus-2 E10 gene product, but not its cellular homologue, activates NF-kappaB transcription factor and c-Jun N-terminal kinase.</title>
        <authorList>
            <person name="Thome M."/>
            <person name="Martinon F."/>
            <person name="Hofmann K."/>
            <person name="Rubio V."/>
            <person name="Steiner V."/>
            <person name="Schneider P."/>
            <person name="Mattmann C."/>
            <person name="Tschopp J."/>
        </authorList>
    </citation>
    <scope>NUCLEOTIDE SEQUENCE [MRNA]</scope>
</reference>
<reference key="4">
    <citation type="journal article" date="1999" name="J. Biol. Chem.">
        <title>mE10, a novel caspase recruitment domain-containing proapoptotic molecule.</title>
        <authorList>
            <person name="Yan M."/>
            <person name="Lee J."/>
            <person name="Schilbach S."/>
            <person name="Goddard A."/>
            <person name="Dixit V.M."/>
        </authorList>
    </citation>
    <scope>NUCLEOTIDE SEQUENCE [MRNA]</scope>
    <scope>FUNCTION</scope>
    <scope>MUTAGENESIS OF LEU-28; LEU-41; ILE-46; LEU-47; GLU-53 AND ILE-55</scope>
</reference>
<reference key="5">
    <citation type="journal article" date="1999" name="J. Biol. Chem.">
        <title>CLAP, a novel caspase recruitment domain-containing protein in the tumor necrosis factor receptor pathway, regulates NF-kappaB activation and apoptosis.</title>
        <authorList>
            <person name="Srinivasula S.M."/>
            <person name="Ahmad M."/>
            <person name="Lin J.-H."/>
            <person name="Poyet J.-L."/>
            <person name="Fernandes-Alnemri T."/>
            <person name="Tsichlis P.N."/>
            <person name="Alnemri E.S."/>
        </authorList>
    </citation>
    <scope>NUCLEOTIDE SEQUENCE [MRNA]</scope>
    <scope>FUNCTION</scope>
</reference>
<reference key="6">
    <citation type="journal article" date="1999" name="J. Biol. Chem.">
        <title>c-E10 is a caspase-recruiting domain-containing protein that interacts with components of death receptors signaling pathway and activates nuclear factor-kappaB.</title>
        <authorList>
            <person name="Costanzo A."/>
            <person name="Guiet C."/>
            <person name="Vito P."/>
        </authorList>
    </citation>
    <scope>NUCLEOTIDE SEQUENCE [MRNA]</scope>
    <scope>FUNCTION</scope>
    <source>
        <tissue>Spleen</tissue>
    </source>
</reference>
<reference key="7">
    <citation type="journal article" date="1999" name="Nat. Genet.">
        <title>Inactivating mutations and overexpression of BCL10, a caspase recruitment domain-containing gene, in MALT lymphoma with t(1;14)(p22;q32).</title>
        <authorList>
            <person name="Zhang Q."/>
            <person name="Siebert R."/>
            <person name="Yan M."/>
            <person name="Hinzmann B."/>
            <person name="Cui X."/>
            <person name="Xue L."/>
            <person name="Rakestraw K.M."/>
            <person name="Naeve C.W."/>
            <person name="Beckmann G."/>
            <person name="Weisenburger D.D."/>
            <person name="Sanger W.G."/>
            <person name="Nowotny H."/>
            <person name="Vesely M."/>
            <person name="Callet-Bauchu E."/>
            <person name="Salles G."/>
            <person name="Dixit V.M."/>
            <person name="Rosenthal A."/>
            <person name="Schlegelberger B."/>
            <person name="Morris S.W."/>
        </authorList>
    </citation>
    <scope>NUCLEOTIDE SEQUENCE [GENOMIC DNA / MRNA]</scope>
    <scope>VARIANTS SER-5; GLU-16; GLU-31; ARG-57; LYS-64; GLU-101; PRO-134; ALA-168; SER-174; GLU-213 AND ILE-230</scope>
</reference>
<reference key="8">
    <citation type="journal article" date="2004" name="Nat. Genet.">
        <title>Complete sequencing and characterization of 21,243 full-length human cDNAs.</title>
        <authorList>
            <person name="Ota T."/>
            <person name="Suzuki Y."/>
            <person name="Nishikawa T."/>
            <person name="Otsuki T."/>
            <person name="Sugiyama T."/>
            <person name="Irie R."/>
            <person name="Wakamatsu A."/>
            <person name="Hayashi K."/>
            <person name="Sato H."/>
            <person name="Nagai K."/>
            <person name="Kimura K."/>
            <person name="Makita H."/>
            <person name="Sekine M."/>
            <person name="Obayashi M."/>
            <person name="Nishi T."/>
            <person name="Shibahara T."/>
            <person name="Tanaka T."/>
            <person name="Ishii S."/>
            <person name="Yamamoto J."/>
            <person name="Saito K."/>
            <person name="Kawai Y."/>
            <person name="Isono Y."/>
            <person name="Nakamura Y."/>
            <person name="Nagahari K."/>
            <person name="Murakami K."/>
            <person name="Yasuda T."/>
            <person name="Iwayanagi T."/>
            <person name="Wagatsuma M."/>
            <person name="Shiratori A."/>
            <person name="Sudo H."/>
            <person name="Hosoiri T."/>
            <person name="Kaku Y."/>
            <person name="Kodaira H."/>
            <person name="Kondo H."/>
            <person name="Sugawara M."/>
            <person name="Takahashi M."/>
            <person name="Kanda K."/>
            <person name="Yokoi T."/>
            <person name="Furuya T."/>
            <person name="Kikkawa E."/>
            <person name="Omura Y."/>
            <person name="Abe K."/>
            <person name="Kamihara K."/>
            <person name="Katsuta N."/>
            <person name="Sato K."/>
            <person name="Tanikawa M."/>
            <person name="Yamazaki M."/>
            <person name="Ninomiya K."/>
            <person name="Ishibashi T."/>
            <person name="Yamashita H."/>
            <person name="Murakawa K."/>
            <person name="Fujimori K."/>
            <person name="Tanai H."/>
            <person name="Kimata M."/>
            <person name="Watanabe M."/>
            <person name="Hiraoka S."/>
            <person name="Chiba Y."/>
            <person name="Ishida S."/>
            <person name="Ono Y."/>
            <person name="Takiguchi S."/>
            <person name="Watanabe S."/>
            <person name="Yosida M."/>
            <person name="Hotuta T."/>
            <person name="Kusano J."/>
            <person name="Kanehori K."/>
            <person name="Takahashi-Fujii A."/>
            <person name="Hara H."/>
            <person name="Tanase T.-O."/>
            <person name="Nomura Y."/>
            <person name="Togiya S."/>
            <person name="Komai F."/>
            <person name="Hara R."/>
            <person name="Takeuchi K."/>
            <person name="Arita M."/>
            <person name="Imose N."/>
            <person name="Musashino K."/>
            <person name="Yuuki H."/>
            <person name="Oshima A."/>
            <person name="Sasaki N."/>
            <person name="Aotsuka S."/>
            <person name="Yoshikawa Y."/>
            <person name="Matsunawa H."/>
            <person name="Ichihara T."/>
            <person name="Shiohata N."/>
            <person name="Sano S."/>
            <person name="Moriya S."/>
            <person name="Momiyama H."/>
            <person name="Satoh N."/>
            <person name="Takami S."/>
            <person name="Terashima Y."/>
            <person name="Suzuki O."/>
            <person name="Nakagawa S."/>
            <person name="Senoh A."/>
            <person name="Mizoguchi H."/>
            <person name="Goto Y."/>
            <person name="Shimizu F."/>
            <person name="Wakebe H."/>
            <person name="Hishigaki H."/>
            <person name="Watanabe T."/>
            <person name="Sugiyama A."/>
            <person name="Takemoto M."/>
            <person name="Kawakami B."/>
            <person name="Yamazaki M."/>
            <person name="Watanabe K."/>
            <person name="Kumagai A."/>
            <person name="Itakura S."/>
            <person name="Fukuzumi Y."/>
            <person name="Fujimori Y."/>
            <person name="Komiyama M."/>
            <person name="Tashiro H."/>
            <person name="Tanigami A."/>
            <person name="Fujiwara T."/>
            <person name="Ono T."/>
            <person name="Yamada K."/>
            <person name="Fujii Y."/>
            <person name="Ozaki K."/>
            <person name="Hirao M."/>
            <person name="Ohmori Y."/>
            <person name="Kawabata A."/>
            <person name="Hikiji T."/>
            <person name="Kobatake N."/>
            <person name="Inagaki H."/>
            <person name="Ikema Y."/>
            <person name="Okamoto S."/>
            <person name="Okitani R."/>
            <person name="Kawakami T."/>
            <person name="Noguchi S."/>
            <person name="Itoh T."/>
            <person name="Shigeta K."/>
            <person name="Senba T."/>
            <person name="Matsumura K."/>
            <person name="Nakajima Y."/>
            <person name="Mizuno T."/>
            <person name="Morinaga M."/>
            <person name="Sasaki M."/>
            <person name="Togashi T."/>
            <person name="Oyama M."/>
            <person name="Hata H."/>
            <person name="Watanabe M."/>
            <person name="Komatsu T."/>
            <person name="Mizushima-Sugano J."/>
            <person name="Satoh T."/>
            <person name="Shirai Y."/>
            <person name="Takahashi Y."/>
            <person name="Nakagawa K."/>
            <person name="Okumura K."/>
            <person name="Nagase T."/>
            <person name="Nomura N."/>
            <person name="Kikuchi H."/>
            <person name="Masuho Y."/>
            <person name="Yamashita R."/>
            <person name="Nakai K."/>
            <person name="Yada T."/>
            <person name="Nakamura Y."/>
            <person name="Ohara O."/>
            <person name="Isogai T."/>
            <person name="Sugano S."/>
        </authorList>
    </citation>
    <scope>NUCLEOTIDE SEQUENCE [LARGE SCALE MRNA]</scope>
    <source>
        <tissue>Tongue</tissue>
    </source>
</reference>
<reference key="9">
    <citation type="journal article" date="2006" name="Nature">
        <title>The DNA sequence and biological annotation of human chromosome 1.</title>
        <authorList>
            <person name="Gregory S.G."/>
            <person name="Barlow K.F."/>
            <person name="McLay K.E."/>
            <person name="Kaul R."/>
            <person name="Swarbreck D."/>
            <person name="Dunham A."/>
            <person name="Scott C.E."/>
            <person name="Howe K.L."/>
            <person name="Woodfine K."/>
            <person name="Spencer C.C.A."/>
            <person name="Jones M.C."/>
            <person name="Gillson C."/>
            <person name="Searle S."/>
            <person name="Zhou Y."/>
            <person name="Kokocinski F."/>
            <person name="McDonald L."/>
            <person name="Evans R."/>
            <person name="Phillips K."/>
            <person name="Atkinson A."/>
            <person name="Cooper R."/>
            <person name="Jones C."/>
            <person name="Hall R.E."/>
            <person name="Andrews T.D."/>
            <person name="Lloyd C."/>
            <person name="Ainscough R."/>
            <person name="Almeida J.P."/>
            <person name="Ambrose K.D."/>
            <person name="Anderson F."/>
            <person name="Andrew R.W."/>
            <person name="Ashwell R.I.S."/>
            <person name="Aubin K."/>
            <person name="Babbage A.K."/>
            <person name="Bagguley C.L."/>
            <person name="Bailey J."/>
            <person name="Beasley H."/>
            <person name="Bethel G."/>
            <person name="Bird C.P."/>
            <person name="Bray-Allen S."/>
            <person name="Brown J.Y."/>
            <person name="Brown A.J."/>
            <person name="Buckley D."/>
            <person name="Burton J."/>
            <person name="Bye J."/>
            <person name="Carder C."/>
            <person name="Chapman J.C."/>
            <person name="Clark S.Y."/>
            <person name="Clarke G."/>
            <person name="Clee C."/>
            <person name="Cobley V."/>
            <person name="Collier R.E."/>
            <person name="Corby N."/>
            <person name="Coville G.J."/>
            <person name="Davies J."/>
            <person name="Deadman R."/>
            <person name="Dunn M."/>
            <person name="Earthrowl M."/>
            <person name="Ellington A.G."/>
            <person name="Errington H."/>
            <person name="Frankish A."/>
            <person name="Frankland J."/>
            <person name="French L."/>
            <person name="Garner P."/>
            <person name="Garnett J."/>
            <person name="Gay L."/>
            <person name="Ghori M.R.J."/>
            <person name="Gibson R."/>
            <person name="Gilby L.M."/>
            <person name="Gillett W."/>
            <person name="Glithero R.J."/>
            <person name="Grafham D.V."/>
            <person name="Griffiths C."/>
            <person name="Griffiths-Jones S."/>
            <person name="Grocock R."/>
            <person name="Hammond S."/>
            <person name="Harrison E.S.I."/>
            <person name="Hart E."/>
            <person name="Haugen E."/>
            <person name="Heath P.D."/>
            <person name="Holmes S."/>
            <person name="Holt K."/>
            <person name="Howden P.J."/>
            <person name="Hunt A.R."/>
            <person name="Hunt S.E."/>
            <person name="Hunter G."/>
            <person name="Isherwood J."/>
            <person name="James R."/>
            <person name="Johnson C."/>
            <person name="Johnson D."/>
            <person name="Joy A."/>
            <person name="Kay M."/>
            <person name="Kershaw J.K."/>
            <person name="Kibukawa M."/>
            <person name="Kimberley A.M."/>
            <person name="King A."/>
            <person name="Knights A.J."/>
            <person name="Lad H."/>
            <person name="Laird G."/>
            <person name="Lawlor S."/>
            <person name="Leongamornlert D.A."/>
            <person name="Lloyd D.M."/>
            <person name="Loveland J."/>
            <person name="Lovell J."/>
            <person name="Lush M.J."/>
            <person name="Lyne R."/>
            <person name="Martin S."/>
            <person name="Mashreghi-Mohammadi M."/>
            <person name="Matthews L."/>
            <person name="Matthews N.S.W."/>
            <person name="McLaren S."/>
            <person name="Milne S."/>
            <person name="Mistry S."/>
            <person name="Moore M.J.F."/>
            <person name="Nickerson T."/>
            <person name="O'Dell C.N."/>
            <person name="Oliver K."/>
            <person name="Palmeiri A."/>
            <person name="Palmer S.A."/>
            <person name="Parker A."/>
            <person name="Patel D."/>
            <person name="Pearce A.V."/>
            <person name="Peck A.I."/>
            <person name="Pelan S."/>
            <person name="Phelps K."/>
            <person name="Phillimore B.J."/>
            <person name="Plumb R."/>
            <person name="Rajan J."/>
            <person name="Raymond C."/>
            <person name="Rouse G."/>
            <person name="Saenphimmachak C."/>
            <person name="Sehra H.K."/>
            <person name="Sheridan E."/>
            <person name="Shownkeen R."/>
            <person name="Sims S."/>
            <person name="Skuce C.D."/>
            <person name="Smith M."/>
            <person name="Steward C."/>
            <person name="Subramanian S."/>
            <person name="Sycamore N."/>
            <person name="Tracey A."/>
            <person name="Tromans A."/>
            <person name="Van Helmond Z."/>
            <person name="Wall M."/>
            <person name="Wallis J.M."/>
            <person name="White S."/>
            <person name="Whitehead S.L."/>
            <person name="Wilkinson J.E."/>
            <person name="Willey D.L."/>
            <person name="Williams H."/>
            <person name="Wilming L."/>
            <person name="Wray P.W."/>
            <person name="Wu Z."/>
            <person name="Coulson A."/>
            <person name="Vaudin M."/>
            <person name="Sulston J.E."/>
            <person name="Durbin R.M."/>
            <person name="Hubbard T."/>
            <person name="Wooster R."/>
            <person name="Dunham I."/>
            <person name="Carter N.P."/>
            <person name="McVean G."/>
            <person name="Ross M.T."/>
            <person name="Harrow J."/>
            <person name="Olson M.V."/>
            <person name="Beck S."/>
            <person name="Rogers J."/>
            <person name="Bentley D.R."/>
        </authorList>
    </citation>
    <scope>NUCLEOTIDE SEQUENCE [LARGE SCALE GENOMIC DNA]</scope>
</reference>
<reference key="10">
    <citation type="submission" date="2005-09" db="EMBL/GenBank/DDBJ databases">
        <authorList>
            <person name="Mural R.J."/>
            <person name="Istrail S."/>
            <person name="Sutton G."/>
            <person name="Florea L."/>
            <person name="Halpern A.L."/>
            <person name="Mobarry C.M."/>
            <person name="Lippert R."/>
            <person name="Walenz B."/>
            <person name="Shatkay H."/>
            <person name="Dew I."/>
            <person name="Miller J.R."/>
            <person name="Flanigan M.J."/>
            <person name="Edwards N.J."/>
            <person name="Bolanos R."/>
            <person name="Fasulo D."/>
            <person name="Halldorsson B.V."/>
            <person name="Hannenhalli S."/>
            <person name="Turner R."/>
            <person name="Yooseph S."/>
            <person name="Lu F."/>
            <person name="Nusskern D.R."/>
            <person name="Shue B.C."/>
            <person name="Zheng X.H."/>
            <person name="Zhong F."/>
            <person name="Delcher A.L."/>
            <person name="Huson D.H."/>
            <person name="Kravitz S.A."/>
            <person name="Mouchard L."/>
            <person name="Reinert K."/>
            <person name="Remington K.A."/>
            <person name="Clark A.G."/>
            <person name="Waterman M.S."/>
            <person name="Eichler E.E."/>
            <person name="Adams M.D."/>
            <person name="Hunkapiller M.W."/>
            <person name="Myers E.W."/>
            <person name="Venter J.C."/>
        </authorList>
    </citation>
    <scope>NUCLEOTIDE SEQUENCE [LARGE SCALE GENOMIC DNA]</scope>
</reference>
<reference key="11">
    <citation type="journal article" date="2004" name="Genome Res.">
        <title>The status, quality, and expansion of the NIH full-length cDNA project: the Mammalian Gene Collection (MGC).</title>
        <authorList>
            <consortium name="The MGC Project Team"/>
        </authorList>
    </citation>
    <scope>NUCLEOTIDE SEQUENCE [LARGE SCALE MRNA]</scope>
    <source>
        <tissue>Eye</tissue>
    </source>
</reference>
<reference key="12">
    <citation type="journal article" date="2001" name="Oncogene">
        <title>Interchangeable binding of Bcl10 to TRAF2 and cIAPs regulates apoptosis signaling.</title>
        <authorList>
            <person name="Yui D."/>
            <person name="Yoneda T."/>
            <person name="Oono K."/>
            <person name="Katayama T."/>
            <person name="Imaizumi K."/>
            <person name="Tohyama M."/>
        </authorList>
    </citation>
    <scope>PHOSPHORYLATION</scope>
    <scope>INTERACTION WITH TRAF2</scope>
</reference>
<reference key="13">
    <citation type="journal article" date="2007" name="J. Biol. Chem.">
        <title>Caveolin-1 triggers T-cell activation via CD26 in association with CARMA1.</title>
        <authorList>
            <person name="Ohnuma K."/>
            <person name="Uchiyama M."/>
            <person name="Yamochi T."/>
            <person name="Nishibashi K."/>
            <person name="Hosono O."/>
            <person name="Takahashi N."/>
            <person name="Kina S."/>
            <person name="Tanaka H."/>
            <person name="Lin X."/>
            <person name="Dang N.H."/>
            <person name="Morimoto C."/>
        </authorList>
    </citation>
    <scope>IDENTIFICATION IN A MEMBRANE RAFT COMPLEX</scope>
    <scope>SUBCELLULAR LOCATION</scope>
</reference>
<reference key="14">
    <citation type="journal article" date="2007" name="Proc. Natl. Acad. Sci. U.S.A.">
        <title>Negative feedback loop in T cell activation through IkappaB kinase-induced phosphorylation and degradation of Bcl10.</title>
        <authorList>
            <person name="Lobry C."/>
            <person name="Lopez T."/>
            <person name="Israel A."/>
            <person name="Weil R."/>
        </authorList>
    </citation>
    <scope>PHOSPHORYLATION BY IKBKB/IKKB</scope>
    <scope>MUTAGENESIS OF 81-THR--SER-85</scope>
</reference>
<reference key="15">
    <citation type="journal article" date="2008" name="Nat. Immunol.">
        <title>The proteolytic activity of the paracaspase MALT1 is key in T cell activation.</title>
        <authorList>
            <person name="Rebeaud F."/>
            <person name="Hailfinger S."/>
            <person name="Posevitz-Fejfar A."/>
            <person name="Tapernoux M."/>
            <person name="Moser R."/>
            <person name="Rueda D."/>
            <person name="Gaide O."/>
            <person name="Guzzardi M."/>
            <person name="Iancu E.M."/>
            <person name="Rufer N."/>
            <person name="Fasel N."/>
            <person name="Thome M."/>
        </authorList>
    </citation>
    <scope>FUNCTION</scope>
    <scope>PROTEOLYTIC CLEAVAGE</scope>
    <scope>MUTAGENESIS OF ARG-228</scope>
</reference>
<reference key="16">
    <citation type="journal article" date="2008" name="Proc. Natl. Acad. Sci. U.S.A.">
        <title>NEMO recognition of ubiquitinated Bcl10 is required for T cell receptor-mediated NF-kappaB activation.</title>
        <authorList>
            <person name="Wu C.J."/>
            <person name="Ashwell J.D."/>
        </authorList>
    </citation>
    <scope>FUNCTION</scope>
    <scope>UBIQUITINATION AT LYS-31 AND LYS-63</scope>
    <scope>MUTAGENESIS OF LYS-31; 63-LYS--LYS-67; LYS-63 AND 105-LYS--LYS-115</scope>
</reference>
<reference key="17">
    <citation type="journal article" date="2009" name="Anal. Chem.">
        <title>Lys-N and trypsin cover complementary parts of the phosphoproteome in a refined SCX-based approach.</title>
        <authorList>
            <person name="Gauci S."/>
            <person name="Helbig A.O."/>
            <person name="Slijper M."/>
            <person name="Krijgsveld J."/>
            <person name="Heck A.J."/>
            <person name="Mohammed S."/>
        </authorList>
    </citation>
    <scope>ACETYLATION [LARGE SCALE ANALYSIS] AT MET-1</scope>
    <scope>IDENTIFICATION BY MASS SPECTROMETRY [LARGE SCALE ANALYSIS]</scope>
</reference>
<reference key="18">
    <citation type="journal article" date="2011" name="BMC Syst. Biol.">
        <title>Initial characterization of the human central proteome.</title>
        <authorList>
            <person name="Burkard T.R."/>
            <person name="Planyavsky M."/>
            <person name="Kaupe I."/>
            <person name="Breitwieser F.P."/>
            <person name="Buerckstuemmer T."/>
            <person name="Bennett K.L."/>
            <person name="Superti-Furga G."/>
            <person name="Colinge J."/>
        </authorList>
    </citation>
    <scope>IDENTIFICATION BY MASS SPECTROMETRY [LARGE SCALE ANALYSIS]</scope>
</reference>
<reference key="19">
    <citation type="journal article" date="2011" name="Sci. Signal.">
        <title>System-wide temporal characterization of the proteome and phosphoproteome of human embryonic stem cell differentiation.</title>
        <authorList>
            <person name="Rigbolt K.T."/>
            <person name="Prokhorova T.A."/>
            <person name="Akimov V."/>
            <person name="Henningsen J."/>
            <person name="Johansen P.T."/>
            <person name="Kratchmarova I."/>
            <person name="Kassem M."/>
            <person name="Mann M."/>
            <person name="Olsen J.V."/>
            <person name="Blagoev B."/>
        </authorList>
    </citation>
    <scope>PHOSPHORYLATION [LARGE SCALE ANALYSIS] AT SER-138</scope>
    <scope>IDENTIFICATION BY MASS SPECTROMETRY [LARGE SCALE ANALYSIS]</scope>
</reference>
<reference key="20">
    <citation type="journal article" date="2014" name="J. Clin. Invest.">
        <title>Inherited BCL10 deficiency impairs hematopoietic and nonhematopoietic immunity.</title>
        <authorList>
            <person name="Torres J.M."/>
            <person name="Martinez-Barricarte R."/>
            <person name="Garcia-Gomez S."/>
            <person name="Mazariegos M.S."/>
            <person name="Itan Y."/>
            <person name="Boisson B."/>
            <person name="Rholvarez R."/>
            <person name="Jimenez-Reinoso A."/>
            <person name="Del Pino L."/>
            <person name="Rodriguez-Pena R."/>
            <person name="Ferreira A."/>
            <person name="Hernandez-Jimenez E."/>
            <person name="Toledano V."/>
            <person name="Cubillos-Zapata C."/>
            <person name="Diaz-Almiron M."/>
            <person name="Lopez-Collazo E."/>
            <person name="Unzueta-Roch J.L."/>
            <person name="Sanchez-Ramon S."/>
            <person name="Regueiro J.R."/>
            <person name="Lopez-Granados E."/>
            <person name="Casanova J.L."/>
            <person name="Perez de Diego R."/>
        </authorList>
    </citation>
    <scope>FUNCTION</scope>
    <scope>INVOLVEMENT IN IMD37</scope>
</reference>
<reference key="21">
    <citation type="journal article" date="2015" name="Immunity">
        <title>Ubiquitin ligase TRIM62 regulates CARD9-mediated anti-fungal immunity and intestinal inflammation.</title>
        <authorList>
            <person name="Cao Z."/>
            <person name="Conway K.L."/>
            <person name="Heath R.J."/>
            <person name="Rush J.S."/>
            <person name="Leshchiner E.S."/>
            <person name="Ramirez-Ortiz Z.G."/>
            <person name="Nedelsky N.B."/>
            <person name="Huang H."/>
            <person name="Ng A."/>
            <person name="Gardet A."/>
            <person name="Cheng S.C."/>
            <person name="Shamji A.F."/>
            <person name="Rioux J.D."/>
            <person name="Wijmenga C."/>
            <person name="Netea M.G."/>
            <person name="Means T.K."/>
            <person name="Daly M.J."/>
            <person name="Xavier R.J."/>
        </authorList>
    </citation>
    <scope>FUNCTION</scope>
    <scope>INTERACTION WITH CARD9</scope>
</reference>
<reference key="22">
    <citation type="journal article" date="2016" name="EMBO Rep.">
        <title>The paracaspase MALT1 mediates CARD14-induced signaling in keratinocytes.</title>
        <authorList>
            <person name="Afonina I.S."/>
            <person name="Van Nuffel E."/>
            <person name="Baudelet G."/>
            <person name="Driege Y."/>
            <person name="Kreike M."/>
            <person name="Staal J."/>
            <person name="Beyaert R."/>
        </authorList>
    </citation>
    <scope>SUBUNIT</scope>
</reference>
<reference key="23">
    <citation type="journal article" date="2016" name="J. Biol. Chem.">
        <title>Molecular determinants of scaffold-induced linear ubiquitinylation of B Cell Lymphoma/Leukemia 10 (Bcl10) during T cell receptor and oncogenic caspase recruitment domain-containing protein 11 (CARD11) signaling.</title>
        <authorList>
            <person name="Yang Y.K."/>
            <person name="Yang C."/>
            <person name="Chan W."/>
            <person name="Wang Z."/>
            <person name="Deibel K.E."/>
            <person name="Pomerantz J.L."/>
        </authorList>
    </citation>
    <scope>FUNCTION</scope>
    <scope>INTERACTION WITH CARD11</scope>
    <scope>UBIQUITINATION AT LYS-17; LYS-31 AND LYS-63</scope>
    <scope>MUTAGENESIS OF LYS-17; LYS-31 AND LYS-63</scope>
</reference>
<reference key="24">
    <citation type="journal article" date="2017" name="Nat. Genet.">
        <title>Germline hypomorphic CARD11 mutations in severe atopic disease.</title>
        <authorList>
            <person name="Ma C.A."/>
            <person name="Stinson J.R."/>
            <person name="Zhang Y."/>
            <person name="Abbott J.K."/>
            <person name="Weinreich M.A."/>
            <person name="Hauk P.J."/>
            <person name="Reynolds P.R."/>
            <person name="Lyons J.J."/>
            <person name="Nelson C.G."/>
            <person name="Ruffo E."/>
            <person name="Dorjbal B."/>
            <person name="Glauzy S."/>
            <person name="Yamakawa N."/>
            <person name="Arjunaraja S."/>
            <person name="Voss K."/>
            <person name="Stoddard J."/>
            <person name="Niemela J."/>
            <person name="Zhang Y."/>
            <person name="Rosenzweig S.D."/>
            <person name="McElwee J.J."/>
            <person name="DiMaggio T."/>
            <person name="Matthews H.F."/>
            <person name="Jones N."/>
            <person name="Stone K.D."/>
            <person name="Palma A."/>
            <person name="Oleastro M."/>
            <person name="Prieto E."/>
            <person name="Bernasconi A.R."/>
            <person name="Dubra G."/>
            <person name="Danielian S."/>
            <person name="Zaiat J."/>
            <person name="Marti M.A."/>
            <person name="Kim B."/>
            <person name="Cooper M.A."/>
            <person name="Romberg N."/>
            <person name="Meffre E."/>
            <person name="Gelfand E.W."/>
            <person name="Snow A.L."/>
            <person name="Milner J.D."/>
        </authorList>
    </citation>
    <scope>INTERACTION WITH CARD11 AND MALT1</scope>
</reference>
<reference key="25">
    <citation type="journal article" date="2019" name="Nat. Commun.">
        <title>Structures of autoinhibited and polymerized forms of CARD9 reveal mechanisms of CARD9 and CARD11 activation.</title>
        <authorList>
            <person name="Holliday M.J."/>
            <person name="Witt A."/>
            <person name="Rodriguez Gama A."/>
            <person name="Walters B.T."/>
            <person name="Arthur C.P."/>
            <person name="Halfmann R."/>
            <person name="Rohou A."/>
            <person name="Dueber E.C."/>
            <person name="Fairbrother W.J."/>
        </authorList>
    </citation>
    <scope>INTERACTION WITH CARD9 AND CARD11</scope>
</reference>
<reference evidence="30" key="26">
    <citation type="journal article" date="2013" name="Mol. Cell">
        <title>Structural architecture of the CARMA1/Bcl10/MALT1 signalosome: nucleation-induced filamentous assembly.</title>
        <authorList>
            <person name="Qiao Q."/>
            <person name="Yang C."/>
            <person name="Zheng C."/>
            <person name="Fontan L."/>
            <person name="David L."/>
            <person name="Yu X."/>
            <person name="Bracken C."/>
            <person name="Rosen M."/>
            <person name="Melnick A."/>
            <person name="Egelman E.H."/>
            <person name="Wu H."/>
        </authorList>
    </citation>
    <scope>STRUCTURE BY NMR OF 1-115</scope>
    <scope>FUNCTION</scope>
    <scope>SUBUNIT</scope>
    <scope>INTERACTION WITH CARD11</scope>
    <scope>IDENTIFICATION IN A CBM COMPLEX</scope>
    <scope>MUTAGENESIS OF ARG-36; 50-GLU-ASP-51; GLU-50 AND GLU-53</scope>
</reference>
<reference key="27">
    <citation type="journal article" date="1999" name="Cancer Res.">
        <title>Point mutations and deletions of the Bcl10 gene in solid tumors and malignant lymphomas.</title>
        <authorList>
            <person name="Lee S.H."/>
            <person name="Shin M.S."/>
            <person name="Kim H.S."/>
            <person name="Park W.S."/>
            <person name="Kim S.Y."/>
            <person name="Lee H.K."/>
            <person name="Park J.Y."/>
            <person name="Oh R.R."/>
            <person name="Jang J.J."/>
            <person name="Park K.M."/>
            <person name="Han J.Y."/>
            <person name="Kang C.S."/>
            <person name="Lee J.Y."/>
            <person name="Yoo N.J."/>
        </authorList>
    </citation>
    <scope>VARIANTS SER-5; MET-162 AND GLU-213</scope>
</reference>
<reference key="28">
    <citation type="journal article" date="1999" name="Cell">
        <title>Absence of BCL10 mutations in human malignant mesothelioma.</title>
        <authorList>
            <person name="Apostolou S."/>
            <person name="de Rienzo A."/>
            <person name="Murthy S.S."/>
            <person name="Jhanwar S.C."/>
            <person name="Testa J.R."/>
        </authorList>
    </citation>
    <scope>VARIANTS SER-5; GLN-45; GLN-58; SER-93; VAL-153; GLU-213 AND PHE-218</scope>
</reference>
<comment type="function">
    <text evidence="4 5 7 9 14 15 16 17 18 20">Plays a key role in both adaptive and innate immune signaling by bridging CARD domain-containing proteins to immune activation (PubMed:10187770, PubMed:10364242, PubMed:10400625, PubMed:24074955, PubMed:25365219). Acts by channeling adaptive and innate immune signaling downstream of CARD domain-containing proteins CARD9, CARD11 and CARD14 to activate NF-kappa-B and MAP kinase p38 (MAPK11, MAPK12, MAPK13 and/or MAPK14) pathways which stimulate expression of genes encoding pro-inflammatory cytokines and chemokines (PubMed:24074955). Recruited by activated CARD domain-containing proteins: homooligomerized CARD domain-containing proteins form a nucleating helical template that recruits BCL10 via CARD-CARD interaction, thereby promoting polymerization of BCL10, subsequent recruitment of MALT1 and formation of a CBM complex (PubMed:24074955). This leads to activation of NF-kappa-B and MAP kinase p38 (MAPK11, MAPK12, MAPK13 and/or MAPK14) pathways which stimulate expression of genes encoding pro-inflammatory cytokines and chemokines (PubMed:18287044, PubMed:24074955, PubMed:27777308). Activated by CARD9 downstream of C-type lectin receptors; CARD9-mediated signals are essential for antifungal immunity (PubMed:26488816). Activated by CARD11 downstream of T-cell receptor (TCR) and B-cell receptor (BCR) (PubMed:18264101, PubMed:18287044, PubMed:24074955, PubMed:27777308). Promotes apoptosis, pro-caspase-9 maturation and activation of NF-kappa-B via NIK and IKK (PubMed:10187815).</text>
</comment>
<comment type="subunit">
    <text evidence="1 5 11 13 16 18 19 20 21 22">Homomultimer; homooligomerized following recruitment by CARD domain-containing proteins that form a nucleating helical template that recruits BCL10 via CARD-CARD interaction (PubMed:24074955). Self-associates by CARD-CARD interaction and interacts with other CARD-proteins such as CARD9, CARD10, CARD11 and CARD14 (PubMed:24074955, PubMed:26488816, PubMed:27113748, PubMed:27777308, PubMed:28628108, PubMed:31296852). Forms a complex with CARD14 and MALT1; resulting in the formation of a CBM (CARD14-BCL10-MALT1) complex (PubMed:27113748). Forms a complex with CARD11 and MALT1; resulting in the formation of a CBM (CARD11-BCL10-MALT1) complex (PubMed:24074955, PubMed:28628108). Forms a complex with CARD9 and MALT1; resulting in the formation of a CBM (CARD9-BCL10-MALT1) complex (By similarity). Found in a membrane raft complex, at least composed of BCL10, CARD11, DPP4 and IKBKB (PubMed:17287217). Binds caspase-9 with its C-terminal domain (PubMed:10187815). Interacts with TRAF2 and BIRC2/c-IAP2 (PubMed:11466612). Interacts with PELI2 and SOCS3; these interactions may be mutually exclusive (By similarity).</text>
</comment>
<comment type="interaction">
    <interactant intactId="EBI-958922">
        <id>O95999</id>
    </interactant>
    <interactant intactId="EBI-296087">
        <id>P31749</id>
        <label>AKT1</label>
    </interactant>
    <organismsDiffer>false</organismsDiffer>
    <experiments>5</experiments>
</comment>
<comment type="interaction">
    <interactant intactId="EBI-958922">
        <id>O95999</id>
    </interactant>
    <interactant intactId="EBI-958922">
        <id>O95999</id>
        <label>BCL10</label>
    </interactant>
    <organismsDiffer>false</organismsDiffer>
    <experiments>5</experiments>
</comment>
<comment type="interaction">
    <interactant intactId="EBI-958922">
        <id>O95999</id>
    </interactant>
    <interactant intactId="EBI-958997">
        <id>P20749</id>
        <label>BCL3</label>
    </interactant>
    <organismsDiffer>false</organismsDiffer>
    <experiments>3</experiments>
</comment>
<comment type="interaction">
    <interactant intactId="EBI-958922">
        <id>O95999</id>
    </interactant>
    <interactant intactId="EBI-7006141">
        <id>Q9BXL7</id>
        <label>CARD11</label>
    </interactant>
    <organismsDiffer>false</organismsDiffer>
    <experiments>7</experiments>
</comment>
<comment type="interaction">
    <interactant intactId="EBI-958922">
        <id>O95999</id>
    </interactant>
    <interactant intactId="EBI-50436205">
        <id>Q9BXL6-1</id>
        <label>CARD14</label>
    </interactant>
    <organismsDiffer>false</organismsDiffer>
    <experiments>2</experiments>
</comment>
<comment type="interaction">
    <interactant intactId="EBI-958922">
        <id>O95999</id>
    </interactant>
    <interactant intactId="EBI-12114736">
        <id>Q9BXL6-2</id>
        <label>CARD14</label>
    </interactant>
    <organismsDiffer>false</organismsDiffer>
    <experiments>2</experiments>
</comment>
<comment type="interaction">
    <interactant intactId="EBI-958922">
        <id>O95999</id>
    </interactant>
    <interactant intactId="EBI-751319">
        <id>Q9H257</id>
        <label>CARD9</label>
    </interactant>
    <organismsDiffer>false</organismsDiffer>
    <experiments>6</experiments>
</comment>
<comment type="interaction">
    <interactant intactId="EBI-958922">
        <id>O95999</id>
    </interactant>
    <interactant intactId="EBI-3866319">
        <id>Q9Y2V7</id>
        <label>COG6</label>
    </interactant>
    <organismsDiffer>false</organismsDiffer>
    <experiments>5</experiments>
</comment>
<comment type="interaction">
    <interactant intactId="EBI-958922">
        <id>O95999</id>
    </interactant>
    <interactant intactId="EBI-81279">
        <id>Q9Y6K9</id>
        <label>IKBKG</label>
    </interactant>
    <organismsDiffer>false</organismsDiffer>
    <experiments>7</experiments>
</comment>
<comment type="interaction">
    <interactant intactId="EBI-958922">
        <id>O95999</id>
    </interactant>
    <interactant intactId="EBI-1047372">
        <id>Q9UDY8</id>
        <label>MALT1</label>
    </interactant>
    <organismsDiffer>false</organismsDiffer>
    <experiments>24</experiments>
</comment>
<comment type="interaction">
    <interactant intactId="EBI-958922">
        <id>O95999</id>
    </interactant>
    <interactant intactId="EBI-295351">
        <id>Q05513</id>
        <label>PRKCZ</label>
    </interactant>
    <organismsDiffer>false</organismsDiffer>
    <experiments>3</experiments>
</comment>
<comment type="interaction">
    <interactant intactId="EBI-958922">
        <id>O95999</id>
    </interactant>
    <interactant intactId="EBI-355744">
        <id>Q12933</id>
        <label>TRAF2</label>
    </interactant>
    <organismsDiffer>false</organismsDiffer>
    <experiments>11</experiments>
</comment>
<comment type="interaction">
    <interactant intactId="EBI-958922">
        <id>O95999</id>
    </interactant>
    <interactant intactId="EBI-11709474">
        <id>Q66677</id>
        <label>E10</label>
    </interactant>
    <organismsDiffer>true</organismsDiffer>
    <experiments>2</experiments>
</comment>
<comment type="subcellular location">
    <subcellularLocation>
        <location evidence="13">Cytoplasm</location>
        <location evidence="13">Perinuclear region</location>
    </subcellularLocation>
    <subcellularLocation>
        <location evidence="13">Membrane raft</location>
    </subcellularLocation>
    <text evidence="13">Appears to have a perinuclear, compact and filamentous pattern of expression. Also found in the nucleus of several types of tumor cells. Colocalized with DPP4 in membrane rafts.</text>
</comment>
<comment type="tissue specificity">
    <text evidence="23">Ubiquitous.</text>
</comment>
<comment type="PTM">
    <text evidence="11 12">Phosphorylated. Phosphorylation results in dissociation from TRAF2 and binding to BIRC2/c-IAP2 (PubMed:11466612). Phosphorylated by IKBKB/IKKB (PubMed:17213322).</text>
</comment>
<comment type="PTM">
    <text evidence="15 20">Ubiquitinated via both 'Lys-63'-linked and linear ('Met-1'-linked) polyubiquitin chains in response to T-cell receptor (TCR) activation (PubMed:18287044, PubMed:27777308). Ubiquitination is recognized by IKBKG/NEMO, the regulatory subunit of I-kappa-B kinase (IKK), and is required for TCR-induced NF-kappa-B activation (PubMed:18287044, PubMed:27777308). Linear ubiquitination at Lys-17, Lys-31 and Lys-63 is mediated by RNF31/HOIP; linear ubiquitination is recognized with much higher affinity than 'Lys-63'-linked ubiquitin by IKBKG/NEMO (PubMed:27777308). CARD11 is required for linear ubiquitination by HOIP by promoting the targeting of BCL10 to RNF31/HOIP (PubMed:27777308).</text>
</comment>
<comment type="PTM">
    <text evidence="14">Proteolytically cleaved by MALT1; required for T-cell activation.</text>
</comment>
<comment type="disease">
    <text evidence="23">A chromosomal aberration involving BCL10 is recurrent in low-grade mucosa-associated lymphoid tissue (MALT lymphoma). Translocation t(1;14)(p22;q32). Although the BCL10/IgH translocation leaves the coding region of BCL10 intact, frequent BCL10 mutations could be attributed to the Ig somatic hypermutation mechanism resulting in nucleotide transitions.</text>
</comment>
<comment type="disease" evidence="17">
    <disease id="DI-04266">
        <name>Immunodeficiency 37</name>
        <acronym>IMD37</acronym>
        <description>A form of primary combined immunodeficiency, a group of disorders characterized by severe recurrent infections, with normal numbers or an absence of T and B lymphocytes, and impaired cellular and humoral immunity. IMD37 is characterized by hypogammaglobulinemia without lymphopenia, but with profoundly reduced memory B cells and memory T cells, and increased numbers of circulating naive lymphocytes. Inheritance is autosomal recessive.</description>
        <dbReference type="MIM" id="616098"/>
    </disease>
    <text>The disease is caused by variants affecting the gene represented in this entry.</text>
</comment>
<comment type="disease" evidence="23">
    <disease id="DI-04738">
        <name>Lymphoma, mucosa-associated lymphoid type</name>
        <acronym>MALTOMA</acronym>
        <description>A subtype of non-Hodgkin lymphoma, originating in mucosa-associated lymphoid tissue. MALT lymphomas occur most commonly in the gastro-intestinal tract but have been described in a variety of extranodal sites including the ocular adnexa, salivary gland, thyroid, lung, thymus, and breast. Histologically, they are characterized by an infiltrate of small to medium-sized lymphocytes with abundant cytoplasm and irregularly shaped nuclei. Scattered transformed blasts (large cells) also are present. Non-malignant reactive follicles are observed frequently. A pivotal feature is the presence of lymphoepithelial lesions, with invasion and partial destruction of mucosal glands and crypts by aggregates of tumor cells.</description>
        <dbReference type="MIM" id="137245"/>
    </disease>
    <text>The disease is caused by variants affecting the gene represented in this entry.</text>
</comment>
<comment type="online information" name="Atlas of Genetics and Cytogenetics in Oncology and Haematology">
    <link uri="https://atlasgeneticsoncology.org/gene/222/BCL10"/>
</comment>
<organism>
    <name type="scientific">Homo sapiens</name>
    <name type="common">Human</name>
    <dbReference type="NCBI Taxonomy" id="9606"/>
    <lineage>
        <taxon>Eukaryota</taxon>
        <taxon>Metazoa</taxon>
        <taxon>Chordata</taxon>
        <taxon>Craniata</taxon>
        <taxon>Vertebrata</taxon>
        <taxon>Euteleostomi</taxon>
        <taxon>Mammalia</taxon>
        <taxon>Eutheria</taxon>
        <taxon>Euarchontoglires</taxon>
        <taxon>Primates</taxon>
        <taxon>Haplorrhini</taxon>
        <taxon>Catarrhini</taxon>
        <taxon>Hominidae</taxon>
        <taxon>Homo</taxon>
    </lineage>
</organism>
<protein>
    <recommendedName>
        <fullName>B-cell lymphoma/leukemia 10</fullName>
    </recommendedName>
    <alternativeName>
        <fullName evidence="28">B-cell CLL/lymphoma 10</fullName>
        <shortName evidence="28">Bcl-10</shortName>
    </alternativeName>
    <alternativeName>
        <fullName>CARD-containing molecule enhancing NF-kappa-B</fullName>
    </alternativeName>
    <alternativeName>
        <fullName evidence="26">CARD-like apoptotic protein</fullName>
        <shortName evidence="26">hCLAP</shortName>
    </alternativeName>
    <alternativeName>
        <fullName evidence="24">CED-3/ICH-1 prodomain homologous E10-like regulator</fullName>
        <shortName evidence="24">CIPER</shortName>
    </alternativeName>
    <alternativeName>
        <fullName>Cellular homolog of vCARMEN</fullName>
        <shortName>cCARMEN</shortName>
    </alternativeName>
    <alternativeName>
        <fullName evidence="27">Cellular-E10</fullName>
        <shortName evidence="27">c-E10</shortName>
    </alternativeName>
    <alternativeName>
        <fullName evidence="25">Mammalian CARD-containing adapter molecule E10</fullName>
        <shortName evidence="25">mE10</shortName>
    </alternativeName>
</protein>
<proteinExistence type="evidence at protein level"/>
<feature type="chain" id="PRO_0000144074" description="B-cell lymphoma/leukemia 10">
    <location>
        <begin position="1"/>
        <end position="233"/>
    </location>
</feature>
<feature type="domain" description="CARD" evidence="2">
    <location>
        <begin position="13"/>
        <end position="101"/>
    </location>
</feature>
<feature type="region of interest" description="Disordered" evidence="3">
    <location>
        <begin position="187"/>
        <end position="233"/>
    </location>
</feature>
<feature type="compositionally biased region" description="Pro residues" evidence="3">
    <location>
        <begin position="195"/>
        <end position="205"/>
    </location>
</feature>
<feature type="site" description="Cleavage; by MALT1" evidence="14">
    <location>
        <begin position="228"/>
        <end position="229"/>
    </location>
</feature>
<feature type="modified residue" description="N-acetylmethionine" evidence="31">
    <location>
        <position position="1"/>
    </location>
</feature>
<feature type="modified residue" description="Phosphoserine" evidence="32">
    <location>
        <position position="138"/>
    </location>
</feature>
<feature type="cross-link" description="Glycyl lysine isopeptide (Lys-Gly) (interchain with G-Cter in ubiquitin)" evidence="20">
    <location>
        <position position="17"/>
    </location>
</feature>
<feature type="cross-link" description="Glycyl lysine isopeptide (Lys-Gly) (interchain with G-Cter in ubiquitin)" evidence="15 20">
    <location>
        <position position="31"/>
    </location>
</feature>
<feature type="cross-link" description="Glycyl lysine isopeptide (Lys-Gly) (interchain with G-Cter in ubiquitin)" evidence="15 20">
    <location>
        <position position="63"/>
    </location>
</feature>
<feature type="sequence variant" id="VAR_013208" description="Found in a MALT lymphoma sample; uncertain significance; dbSNP:rs12037217." evidence="6 8 10">
    <original>A</original>
    <variation>S</variation>
    <location>
        <position position="5"/>
    </location>
</feature>
<feature type="sequence variant" id="VAR_013209" description="Found in a MALT lymphoma sample; uncertain significance." evidence="6">
    <original>V</original>
    <variation>E</variation>
    <location>
        <position position="16"/>
    </location>
</feature>
<feature type="sequence variant" id="VAR_013210" description="Found in a MALT lymphoma sample; uncertain significance." evidence="6">
    <original>K</original>
    <variation>E</variation>
    <location>
        <position position="31"/>
    </location>
</feature>
<feature type="sequence variant" id="VAR_013211" evidence="8">
    <original>K</original>
    <variation>Q</variation>
    <location>
        <position position="45"/>
    </location>
</feature>
<feature type="sequence variant" id="VAR_013212" description="Found in a mesothelioma sample; uncertain significance." evidence="23">
    <original>T</original>
    <variation>I</variation>
    <location>
        <position position="52"/>
    </location>
</feature>
<feature type="sequence variant" id="VAR_013213" description="Found in a MALT lymphoma sample; uncertain significance." evidence="6">
    <original>C</original>
    <variation>R</variation>
    <location>
        <position position="57"/>
    </location>
</feature>
<feature type="sequence variant" id="VAR_013214" description="Found in a germ cell tumor sample; uncertain significance; dbSNP:rs121918314." evidence="23">
    <original>R</original>
    <variation>G</variation>
    <location>
        <position position="58"/>
    </location>
</feature>
<feature type="sequence variant" id="VAR_013215" description="In dbSNP:rs2100747931." evidence="8">
    <original>R</original>
    <variation>Q</variation>
    <location>
        <position position="58"/>
    </location>
</feature>
<feature type="sequence variant" id="VAR_013216" description="Found in a MALT lymphoma sample; uncertain significance." evidence="6">
    <original>R</original>
    <variation>K</variation>
    <location>
        <position position="64"/>
    </location>
</feature>
<feature type="sequence variant" id="VAR_013217" description="In dbSNP:rs1660347136." evidence="8">
    <original>N</original>
    <variation>S</variation>
    <location>
        <position position="93"/>
    </location>
</feature>
<feature type="sequence variant" id="VAR_013218" description="Found in a MALT lymphoma sample; uncertain significance." evidence="6">
    <original>D</original>
    <variation>E</variation>
    <location>
        <position position="101"/>
    </location>
</feature>
<feature type="sequence variant" id="VAR_013219" description="Found in a MALT lymphoma sample; uncertain significance." evidence="6">
    <original>S</original>
    <variation>P</variation>
    <location>
        <position position="134"/>
    </location>
</feature>
<feature type="sequence variant" id="VAR_013220" evidence="8">
    <original>M</original>
    <variation>V</variation>
    <location>
        <position position="153"/>
    </location>
</feature>
<feature type="sequence variant" id="VAR_077898" description="Found in a testicular teratoma sample; somatic mutation; dbSNP:rs200837308." evidence="10">
    <original>T</original>
    <variation>M</variation>
    <location>
        <position position="162"/>
    </location>
</feature>
<feature type="sequence variant" id="VAR_013221" description="Found in a MALT lymphoma sample; uncertain significance; dbSNP:rs1384278393." evidence="6">
    <original>T</original>
    <variation>A</variation>
    <location>
        <position position="168"/>
    </location>
</feature>
<feature type="sequence variant" id="VAR_013222" description="Found in a MALT lymphoma sample; uncertain significance." evidence="6">
    <original>L</original>
    <variation>S</variation>
    <location>
        <position position="174"/>
    </location>
</feature>
<feature type="sequence variant" id="VAR_013223" description="Found in a follicular lymphoma sample; uncertain significance." evidence="23">
    <location>
        <position position="210"/>
    </location>
</feature>
<feature type="sequence variant" id="VAR_013224" description="Found in a MALT lymphoma sample; uncertain significance; dbSNP:rs3768235." evidence="6 8 10">
    <original>G</original>
    <variation>E</variation>
    <location>
        <position position="213"/>
    </location>
</feature>
<feature type="sequence variant" id="VAR_013225" description="Found in a germ cell tumor and other cancer cell lines; uncertain significance." evidence="8 23">
    <original>S</original>
    <variation>F</variation>
    <location>
        <position position="218"/>
    </location>
</feature>
<feature type="sequence variant" id="VAR_013226" description="Found in a MALT lymphoma sample; uncertain significance." evidence="6">
    <original>V</original>
    <variation>I</variation>
    <location>
        <position position="230"/>
    </location>
</feature>
<feature type="mutagenesis site" description="Decreased linear ubiquitination and impaired ability to activate NF-kappa-B; when associated with R-31 and R-63." evidence="20">
    <original>K</original>
    <variation>R</variation>
    <location>
        <position position="17"/>
    </location>
</feature>
<feature type="mutagenesis site" description="Abolishes cell death-inducing capability." evidence="5">
    <original>L</original>
    <variation>A</variation>
    <location>
        <position position="28"/>
    </location>
</feature>
<feature type="mutagenesis site" description="Decreased ubiquitination and ability to bind NEMO; when associated with 63-R--R-67. Decreased ubiquitination and ability to bind NEMO, impaired ability to activate NF-kappa-B; when associated with R-63. Decreased linear ubiquitination and impaired ability to activate NF-kappa-B; when associated with R-17 and R-63." evidence="15 20">
    <original>K</original>
    <variation>R</variation>
    <location>
        <position position="31"/>
    </location>
</feature>
<feature type="mutagenesis site" description="Abolished homomultimerization and formation of a CBM complex, abolished ability to activate NF-kappa-B." evidence="16">
    <original>R</original>
    <variation>E</variation>
    <location>
        <position position="36"/>
    </location>
</feature>
<feature type="mutagenesis site" description="Abolishes cell death-inducing capability." evidence="4 5">
    <original>L</original>
    <variation>A</variation>
    <location>
        <position position="41"/>
    </location>
</feature>
<feature type="mutagenesis site" description="Abolishes NF-kappa-B activation and homo/heterodimerization." evidence="4 5">
    <original>L</original>
    <variation>Q</variation>
    <location>
        <position position="41"/>
    </location>
</feature>
<feature type="mutagenesis site" description="Abolishes cell death-inducing capability." evidence="5">
    <original>I</original>
    <variation>A</variation>
    <location>
        <position position="46"/>
    </location>
</feature>
<feature type="mutagenesis site" description="Abolishes cell death-inducing capability." evidence="5">
    <original>L</original>
    <variation>A</variation>
    <location>
        <position position="47"/>
    </location>
</feature>
<feature type="mutagenesis site" description="Abolished homomultimerization and formation of a CBM complex." evidence="16">
    <original>ED</original>
    <variation>RR</variation>
    <location>
        <begin position="50"/>
        <end position="51"/>
    </location>
</feature>
<feature type="mutagenesis site" description="Abolished homomultimerization and formation of a CBM complex, abolished ability to activate NF-kappa-B." evidence="16">
    <original>E</original>
    <variation>R</variation>
    <location>
        <position position="50"/>
    </location>
</feature>
<feature type="mutagenesis site" description="Abolishes cell death-inducing capability." evidence="5">
    <original>E</original>
    <variation>A</variation>
    <location>
        <position position="53"/>
    </location>
</feature>
<feature type="mutagenesis site" description="Abolished homomultimerization and formation of a CBM complex, abolished ability to activate NF-kappa-B." evidence="16">
    <original>E</original>
    <variation>R</variation>
    <location>
        <position position="53"/>
    </location>
</feature>
<feature type="mutagenesis site" description="Abolishes cell death-inducing capability." evidence="5">
    <original>I</original>
    <variation>A</variation>
    <location>
        <position position="55"/>
    </location>
</feature>
<feature type="mutagenesis site" description="Decreased ubiquitination and ability to bind NEMO; when associated with R-31." evidence="15">
    <original>KRAGK</original>
    <variation>RRAGR</variation>
    <location>
        <begin position="63"/>
        <end position="67"/>
    </location>
</feature>
<feature type="mutagenesis site" description="Decreased ubiquitination and ability to bind NEMO, impaired ability to activate NF-kappa-B; when associated with R-31. Decreased linear ubiquitination and impaired ability to activate NF-kappa-B; when associated with R-17 and R-31." evidence="15 20">
    <original>K</original>
    <variation>R</variation>
    <location>
        <position position="63"/>
    </location>
</feature>
<feature type="mutagenesis site" description="Abolishes NF-kappa-B activation." evidence="4">
    <original>G</original>
    <variation>R</variation>
    <location>
        <position position="78"/>
    </location>
</feature>
<feature type="mutagenesis site" description="Complete loss of IKBKB/IKKB-mediated phosphorylation." evidence="12">
    <original>TLVES</original>
    <variation>ALVEA</variation>
    <location>
        <begin position="81"/>
        <end position="85"/>
    </location>
</feature>
<feature type="mutagenesis site" description="Does not affect ubiquitination and ability to bind NEMO." evidence="15">
    <original>KLRNIKLEHLK</original>
    <variation>RLRNIRLEHLR</variation>
    <location>
        <begin position="105"/>
        <end position="115"/>
    </location>
</feature>
<feature type="mutagenesis site" description="Abolishes MALT1-mediated cleavage." evidence="14">
    <original>R</original>
    <variation>G</variation>
    <location>
        <position position="228"/>
    </location>
</feature>
<feature type="mutagenesis site" description="Promotes NF-kappa-B activation.">
    <original>S</original>
    <variation>A</variation>
    <location>
        <position position="231"/>
    </location>
</feature>
<feature type="helix" evidence="33">
    <location>
        <begin position="11"/>
        <end position="14"/>
    </location>
</feature>
<feature type="helix" evidence="33">
    <location>
        <begin position="17"/>
        <end position="28"/>
    </location>
</feature>
<feature type="turn" evidence="33">
    <location>
        <begin position="29"/>
        <end position="31"/>
    </location>
</feature>
<feature type="strand" evidence="33">
    <location>
        <begin position="32"/>
        <end position="38"/>
    </location>
</feature>
<feature type="helix" evidence="33">
    <location>
        <begin position="39"/>
        <end position="42"/>
    </location>
</feature>
<feature type="helix" evidence="33">
    <location>
        <begin position="49"/>
        <end position="53"/>
    </location>
</feature>
<feature type="turn" evidence="33">
    <location>
        <begin position="54"/>
        <end position="57"/>
    </location>
</feature>
<feature type="helix" evidence="33">
    <location>
        <begin position="61"/>
        <end position="72"/>
    </location>
</feature>
<feature type="turn" evidence="33">
    <location>
        <begin position="76"/>
        <end position="79"/>
    </location>
</feature>
<feature type="helix" evidence="33">
    <location>
        <begin position="80"/>
        <end position="86"/>
    </location>
</feature>
<feature type="strand" evidence="33">
    <location>
        <begin position="89"/>
        <end position="92"/>
    </location>
</feature>
<feature type="helix" evidence="33">
    <location>
        <begin position="94"/>
        <end position="105"/>
    </location>
</feature>
<feature type="helix" evidence="33">
    <location>
        <begin position="107"/>
        <end position="113"/>
    </location>
</feature>
<sequence>MEPTAPSLTEEDLTEVKKDALENLRVYLCEKIIAERHFDHLRAKKILSREDTEEISCRTSSRKRAGKLLDYLQENPKGLDTLVESIRREKTQNFLIQKITDEVLKLRNIKLEHLKGLKCSSCEPFPDGATNNLSRSNSDESNFSEKLRASTVMYHPEGESSTTPFFSTNSSLNLPVLEVGRTENTIFSSTTLPRPGDPGAPPLPPDLQLEEEGTCANSSEMFLPLRSRTVSRQ</sequence>
<keyword id="KW-0002">3D-structure</keyword>
<keyword id="KW-0007">Acetylation</keyword>
<keyword id="KW-1064">Adaptive immunity</keyword>
<keyword id="KW-0053">Apoptosis</keyword>
<keyword id="KW-0160">Chromosomal rearrangement</keyword>
<keyword id="KW-0963">Cytoplasm</keyword>
<keyword id="KW-0225">Disease variant</keyword>
<keyword id="KW-0391">Immunity</keyword>
<keyword id="KW-0399">Innate immunity</keyword>
<keyword id="KW-1017">Isopeptide bond</keyword>
<keyword id="KW-0472">Membrane</keyword>
<keyword id="KW-0597">Phosphoprotein</keyword>
<keyword id="KW-1267">Proteomics identification</keyword>
<keyword id="KW-1185">Reference proteome</keyword>
<keyword id="KW-0043">Tumor suppressor</keyword>
<keyword id="KW-0832">Ubl conjugation</keyword>
<evidence type="ECO:0000250" key="1">
    <source>
        <dbReference type="UniProtKB" id="Q9Z0H7"/>
    </source>
</evidence>
<evidence type="ECO:0000255" key="2">
    <source>
        <dbReference type="PROSITE-ProRule" id="PRU00046"/>
    </source>
</evidence>
<evidence type="ECO:0000256" key="3">
    <source>
        <dbReference type="SAM" id="MobiDB-lite"/>
    </source>
</evidence>
<evidence type="ECO:0000269" key="4">
    <source>
    </source>
</evidence>
<evidence type="ECO:0000269" key="5">
    <source>
    </source>
</evidence>
<evidence type="ECO:0000269" key="6">
    <source>
    </source>
</evidence>
<evidence type="ECO:0000269" key="7">
    <source>
    </source>
</evidence>
<evidence type="ECO:0000269" key="8">
    <source>
    </source>
</evidence>
<evidence type="ECO:0000269" key="9">
    <source>
    </source>
</evidence>
<evidence type="ECO:0000269" key="10">
    <source>
    </source>
</evidence>
<evidence type="ECO:0000269" key="11">
    <source>
    </source>
</evidence>
<evidence type="ECO:0000269" key="12">
    <source>
    </source>
</evidence>
<evidence type="ECO:0000269" key="13">
    <source>
    </source>
</evidence>
<evidence type="ECO:0000269" key="14">
    <source>
    </source>
</evidence>
<evidence type="ECO:0000269" key="15">
    <source>
    </source>
</evidence>
<evidence type="ECO:0000269" key="16">
    <source>
    </source>
</evidence>
<evidence type="ECO:0000269" key="17">
    <source>
    </source>
</evidence>
<evidence type="ECO:0000269" key="18">
    <source>
    </source>
</evidence>
<evidence type="ECO:0000269" key="19">
    <source>
    </source>
</evidence>
<evidence type="ECO:0000269" key="20">
    <source>
    </source>
</evidence>
<evidence type="ECO:0000269" key="21">
    <source>
    </source>
</evidence>
<evidence type="ECO:0000269" key="22">
    <source>
    </source>
</evidence>
<evidence type="ECO:0000269" key="23">
    <source>
    </source>
</evidence>
<evidence type="ECO:0000303" key="24">
    <source>
    </source>
</evidence>
<evidence type="ECO:0000303" key="25">
    <source>
    </source>
</evidence>
<evidence type="ECO:0000303" key="26">
    <source>
    </source>
</evidence>
<evidence type="ECO:0000303" key="27">
    <source>
    </source>
</evidence>
<evidence type="ECO:0000303" key="28">
    <source>
    </source>
</evidence>
<evidence type="ECO:0000312" key="29">
    <source>
        <dbReference type="HGNC" id="HGNC:989"/>
    </source>
</evidence>
<evidence type="ECO:0007744" key="30">
    <source>
        <dbReference type="PDB" id="2MB9"/>
    </source>
</evidence>
<evidence type="ECO:0007744" key="31">
    <source>
    </source>
</evidence>
<evidence type="ECO:0007744" key="32">
    <source>
    </source>
</evidence>
<evidence type="ECO:0007829" key="33">
    <source>
        <dbReference type="PDB" id="2MB9"/>
    </source>
</evidence>
<name>BCL10_HUMAN</name>
<gene>
    <name evidence="28 29" type="primary">BCL10</name>
    <name evidence="24" type="synonym">CIPER</name>
    <name evidence="26" type="synonym">CLAP</name>
</gene>